<proteinExistence type="inferred from homology"/>
<accession>Q9PET2</accession>
<name>GLYA_XYLFA</name>
<gene>
    <name evidence="1" type="primary">glyA</name>
    <name type="ordered locus">XF_0946</name>
</gene>
<dbReference type="EC" id="2.1.2.1" evidence="1"/>
<dbReference type="EMBL" id="AE003849">
    <property type="protein sequence ID" value="AAF83756.1"/>
    <property type="status" value="ALT_INIT"/>
    <property type="molecule type" value="Genomic_DNA"/>
</dbReference>
<dbReference type="PIR" id="E82743">
    <property type="entry name" value="E82743"/>
</dbReference>
<dbReference type="RefSeq" id="WP_031338016.1">
    <property type="nucleotide sequence ID" value="NC_002488.3"/>
</dbReference>
<dbReference type="SMR" id="Q9PET2"/>
<dbReference type="STRING" id="160492.XF_0946"/>
<dbReference type="KEGG" id="xfa:XF_0946"/>
<dbReference type="eggNOG" id="COG0112">
    <property type="taxonomic scope" value="Bacteria"/>
</dbReference>
<dbReference type="HOGENOM" id="CLU_022477_2_1_6"/>
<dbReference type="UniPathway" id="UPA00193"/>
<dbReference type="UniPathway" id="UPA00288">
    <property type="reaction ID" value="UER01023"/>
</dbReference>
<dbReference type="Proteomes" id="UP000000812">
    <property type="component" value="Chromosome"/>
</dbReference>
<dbReference type="GO" id="GO:0005829">
    <property type="term" value="C:cytosol"/>
    <property type="evidence" value="ECO:0007669"/>
    <property type="project" value="TreeGrafter"/>
</dbReference>
<dbReference type="GO" id="GO:0004372">
    <property type="term" value="F:glycine hydroxymethyltransferase activity"/>
    <property type="evidence" value="ECO:0007669"/>
    <property type="project" value="UniProtKB-UniRule"/>
</dbReference>
<dbReference type="GO" id="GO:0030170">
    <property type="term" value="F:pyridoxal phosphate binding"/>
    <property type="evidence" value="ECO:0007669"/>
    <property type="project" value="UniProtKB-UniRule"/>
</dbReference>
<dbReference type="GO" id="GO:0019264">
    <property type="term" value="P:glycine biosynthetic process from serine"/>
    <property type="evidence" value="ECO:0007669"/>
    <property type="project" value="UniProtKB-UniRule"/>
</dbReference>
<dbReference type="GO" id="GO:0035999">
    <property type="term" value="P:tetrahydrofolate interconversion"/>
    <property type="evidence" value="ECO:0007669"/>
    <property type="project" value="UniProtKB-UniRule"/>
</dbReference>
<dbReference type="CDD" id="cd00378">
    <property type="entry name" value="SHMT"/>
    <property type="match status" value="1"/>
</dbReference>
<dbReference type="FunFam" id="3.40.640.10:FF:000001">
    <property type="entry name" value="Serine hydroxymethyltransferase"/>
    <property type="match status" value="1"/>
</dbReference>
<dbReference type="FunFam" id="3.90.1150.10:FF:000003">
    <property type="entry name" value="Serine hydroxymethyltransferase"/>
    <property type="match status" value="1"/>
</dbReference>
<dbReference type="Gene3D" id="3.90.1150.10">
    <property type="entry name" value="Aspartate Aminotransferase, domain 1"/>
    <property type="match status" value="1"/>
</dbReference>
<dbReference type="Gene3D" id="3.40.640.10">
    <property type="entry name" value="Type I PLP-dependent aspartate aminotransferase-like (Major domain)"/>
    <property type="match status" value="1"/>
</dbReference>
<dbReference type="HAMAP" id="MF_00051">
    <property type="entry name" value="SHMT"/>
    <property type="match status" value="1"/>
</dbReference>
<dbReference type="InterPro" id="IPR015424">
    <property type="entry name" value="PyrdxlP-dep_Trfase"/>
</dbReference>
<dbReference type="InterPro" id="IPR015421">
    <property type="entry name" value="PyrdxlP-dep_Trfase_major"/>
</dbReference>
<dbReference type="InterPro" id="IPR015422">
    <property type="entry name" value="PyrdxlP-dep_Trfase_small"/>
</dbReference>
<dbReference type="InterPro" id="IPR001085">
    <property type="entry name" value="Ser_HO-MeTrfase"/>
</dbReference>
<dbReference type="InterPro" id="IPR049943">
    <property type="entry name" value="Ser_HO-MeTrfase-like"/>
</dbReference>
<dbReference type="InterPro" id="IPR019798">
    <property type="entry name" value="Ser_HO-MeTrfase_PLP_BS"/>
</dbReference>
<dbReference type="InterPro" id="IPR039429">
    <property type="entry name" value="SHMT-like_dom"/>
</dbReference>
<dbReference type="NCBIfam" id="NF000586">
    <property type="entry name" value="PRK00011.1"/>
    <property type="match status" value="1"/>
</dbReference>
<dbReference type="PANTHER" id="PTHR11680">
    <property type="entry name" value="SERINE HYDROXYMETHYLTRANSFERASE"/>
    <property type="match status" value="1"/>
</dbReference>
<dbReference type="PANTHER" id="PTHR11680:SF50">
    <property type="entry name" value="SERINE HYDROXYMETHYLTRANSFERASE"/>
    <property type="match status" value="1"/>
</dbReference>
<dbReference type="Pfam" id="PF00464">
    <property type="entry name" value="SHMT"/>
    <property type="match status" value="1"/>
</dbReference>
<dbReference type="PIRSF" id="PIRSF000412">
    <property type="entry name" value="SHMT"/>
    <property type="match status" value="1"/>
</dbReference>
<dbReference type="SUPFAM" id="SSF53383">
    <property type="entry name" value="PLP-dependent transferases"/>
    <property type="match status" value="1"/>
</dbReference>
<dbReference type="PROSITE" id="PS00096">
    <property type="entry name" value="SHMT"/>
    <property type="match status" value="1"/>
</dbReference>
<feature type="chain" id="PRO_0000113703" description="Serine hydroxymethyltransferase">
    <location>
        <begin position="1"/>
        <end position="417"/>
    </location>
</feature>
<feature type="binding site" evidence="1">
    <location>
        <position position="121"/>
    </location>
    <ligand>
        <name>(6S)-5,6,7,8-tetrahydrofolate</name>
        <dbReference type="ChEBI" id="CHEBI:57453"/>
    </ligand>
</feature>
<feature type="binding site" evidence="1">
    <location>
        <begin position="125"/>
        <end position="127"/>
    </location>
    <ligand>
        <name>(6S)-5,6,7,8-tetrahydrofolate</name>
        <dbReference type="ChEBI" id="CHEBI:57453"/>
    </ligand>
</feature>
<feature type="binding site" evidence="1">
    <location>
        <begin position="355"/>
        <end position="357"/>
    </location>
    <ligand>
        <name>(6S)-5,6,7,8-tetrahydrofolate</name>
        <dbReference type="ChEBI" id="CHEBI:57453"/>
    </ligand>
</feature>
<feature type="site" description="Plays an important role in substrate specificity" evidence="1">
    <location>
        <position position="228"/>
    </location>
</feature>
<feature type="modified residue" description="N6-(pyridoxal phosphate)lysine" evidence="1">
    <location>
        <position position="229"/>
    </location>
</feature>
<comment type="function">
    <text evidence="1">Catalyzes the reversible interconversion of serine and glycine with tetrahydrofolate (THF) serving as the one-carbon carrier. This reaction serves as the major source of one-carbon groups required for the biosynthesis of purines, thymidylate, methionine, and other important biomolecules. Also exhibits THF-independent aldolase activity toward beta-hydroxyamino acids, producing glycine and aldehydes, via a retro-aldol mechanism.</text>
</comment>
<comment type="catalytic activity">
    <reaction evidence="1">
        <text>(6R)-5,10-methylene-5,6,7,8-tetrahydrofolate + glycine + H2O = (6S)-5,6,7,8-tetrahydrofolate + L-serine</text>
        <dbReference type="Rhea" id="RHEA:15481"/>
        <dbReference type="ChEBI" id="CHEBI:15377"/>
        <dbReference type="ChEBI" id="CHEBI:15636"/>
        <dbReference type="ChEBI" id="CHEBI:33384"/>
        <dbReference type="ChEBI" id="CHEBI:57305"/>
        <dbReference type="ChEBI" id="CHEBI:57453"/>
        <dbReference type="EC" id="2.1.2.1"/>
    </reaction>
</comment>
<comment type="cofactor">
    <cofactor evidence="1">
        <name>pyridoxal 5'-phosphate</name>
        <dbReference type="ChEBI" id="CHEBI:597326"/>
    </cofactor>
</comment>
<comment type="pathway">
    <text evidence="1">One-carbon metabolism; tetrahydrofolate interconversion.</text>
</comment>
<comment type="pathway">
    <text evidence="1">Amino-acid biosynthesis; glycine biosynthesis; glycine from L-serine: step 1/1.</text>
</comment>
<comment type="subunit">
    <text evidence="1">Homodimer.</text>
</comment>
<comment type="subcellular location">
    <subcellularLocation>
        <location evidence="1">Cytoplasm</location>
    </subcellularLocation>
</comment>
<comment type="similarity">
    <text evidence="1">Belongs to the SHMT family.</text>
</comment>
<comment type="sequence caution" evidence="2">
    <conflict type="erroneous initiation">
        <sequence resource="EMBL-CDS" id="AAF83756"/>
    </conflict>
</comment>
<protein>
    <recommendedName>
        <fullName evidence="1">Serine hydroxymethyltransferase</fullName>
        <shortName evidence="1">SHMT</shortName>
        <shortName evidence="1">Serine methylase</shortName>
        <ecNumber evidence="1">2.1.2.1</ecNumber>
    </recommendedName>
</protein>
<keyword id="KW-0028">Amino-acid biosynthesis</keyword>
<keyword id="KW-0963">Cytoplasm</keyword>
<keyword id="KW-0554">One-carbon metabolism</keyword>
<keyword id="KW-0663">Pyridoxal phosphate</keyword>
<keyword id="KW-0808">Transferase</keyword>
<sequence>MFPRDARLDMYDPELAKAIAAEVMRQEDHVELIASENYCSTLVMQVQGSQLTNKYAEGYSGKRYYGGCECVDIAEQLAIERAKQLFGADYANVQPHSGSQANQAVYFALLQPGDTILGMSLAHGGHLTHGANVNVSGKLFNAVQYGVNGQGLIDYEAVESLALEHRPKMVVAGFSAYSQKIDWARFRAIADQVGAYLLVDMAHVAGLVAACVYPNPLPHAHVVTSTTHKTLRGPRGGIIVAQAPQEALVKKLQSIVFPGIQGGPLMHVIAAKAVAFKEALEPAFKVYQQQVVKNAKAMAETLMLRGYKIVSGGTENHLMLVDMIGRDVSGKDAEGALGQAHITVNKNAVPDDPRSPFVTSGLRLGTPAVTTRGYQEQDCVDLAHWIADVLDAPADATVIAAVREKVAAQCRKYPVYR</sequence>
<reference key="1">
    <citation type="journal article" date="2000" name="Nature">
        <title>The genome sequence of the plant pathogen Xylella fastidiosa.</title>
        <authorList>
            <person name="Simpson A.J.G."/>
            <person name="Reinach F.C."/>
            <person name="Arruda P."/>
            <person name="Abreu F.A."/>
            <person name="Acencio M."/>
            <person name="Alvarenga R."/>
            <person name="Alves L.M.C."/>
            <person name="Araya J.E."/>
            <person name="Baia G.S."/>
            <person name="Baptista C.S."/>
            <person name="Barros M.H."/>
            <person name="Bonaccorsi E.D."/>
            <person name="Bordin S."/>
            <person name="Bove J.M."/>
            <person name="Briones M.R.S."/>
            <person name="Bueno M.R.P."/>
            <person name="Camargo A.A."/>
            <person name="Camargo L.E.A."/>
            <person name="Carraro D.M."/>
            <person name="Carrer H."/>
            <person name="Colauto N.B."/>
            <person name="Colombo C."/>
            <person name="Costa F.F."/>
            <person name="Costa M.C.R."/>
            <person name="Costa-Neto C.M."/>
            <person name="Coutinho L.L."/>
            <person name="Cristofani M."/>
            <person name="Dias-Neto E."/>
            <person name="Docena C."/>
            <person name="El-Dorry H."/>
            <person name="Facincani A.P."/>
            <person name="Ferreira A.J.S."/>
            <person name="Ferreira V.C.A."/>
            <person name="Ferro J.A."/>
            <person name="Fraga J.S."/>
            <person name="Franca S.C."/>
            <person name="Franco M.C."/>
            <person name="Frohme M."/>
            <person name="Furlan L.R."/>
            <person name="Garnier M."/>
            <person name="Goldman G.H."/>
            <person name="Goldman M.H.S."/>
            <person name="Gomes S.L."/>
            <person name="Gruber A."/>
            <person name="Ho P.L."/>
            <person name="Hoheisel J.D."/>
            <person name="Junqueira M.L."/>
            <person name="Kemper E.L."/>
            <person name="Kitajima J.P."/>
            <person name="Krieger J.E."/>
            <person name="Kuramae E.E."/>
            <person name="Laigret F."/>
            <person name="Lambais M.R."/>
            <person name="Leite L.C.C."/>
            <person name="Lemos E.G.M."/>
            <person name="Lemos M.V.F."/>
            <person name="Lopes S.A."/>
            <person name="Lopes C.R."/>
            <person name="Machado J.A."/>
            <person name="Machado M.A."/>
            <person name="Madeira A.M.B.N."/>
            <person name="Madeira H.M.F."/>
            <person name="Marino C.L."/>
            <person name="Marques M.V."/>
            <person name="Martins E.A.L."/>
            <person name="Martins E.M.F."/>
            <person name="Matsukuma A.Y."/>
            <person name="Menck C.F.M."/>
            <person name="Miracca E.C."/>
            <person name="Miyaki C.Y."/>
            <person name="Monteiro-Vitorello C.B."/>
            <person name="Moon D.H."/>
            <person name="Nagai M.A."/>
            <person name="Nascimento A.L.T.O."/>
            <person name="Netto L.E.S."/>
            <person name="Nhani A. Jr."/>
            <person name="Nobrega F.G."/>
            <person name="Nunes L.R."/>
            <person name="Oliveira M.A."/>
            <person name="de Oliveira M.C."/>
            <person name="de Oliveira R.C."/>
            <person name="Palmieri D.A."/>
            <person name="Paris A."/>
            <person name="Peixoto B.R."/>
            <person name="Pereira G.A.G."/>
            <person name="Pereira H.A. Jr."/>
            <person name="Pesquero J.B."/>
            <person name="Quaggio R.B."/>
            <person name="Roberto P.G."/>
            <person name="Rodrigues V."/>
            <person name="de Rosa A.J.M."/>
            <person name="de Rosa V.E. Jr."/>
            <person name="de Sa R.G."/>
            <person name="Santelli R.V."/>
            <person name="Sawasaki H.E."/>
            <person name="da Silva A.C.R."/>
            <person name="da Silva A.M."/>
            <person name="da Silva F.R."/>
            <person name="Silva W.A. Jr."/>
            <person name="da Silveira J.F."/>
            <person name="Silvestri M.L.Z."/>
            <person name="Siqueira W.J."/>
            <person name="de Souza A.A."/>
            <person name="de Souza A.P."/>
            <person name="Terenzi M.F."/>
            <person name="Truffi D."/>
            <person name="Tsai S.M."/>
            <person name="Tsuhako M.H."/>
            <person name="Vallada H."/>
            <person name="Van Sluys M.A."/>
            <person name="Verjovski-Almeida S."/>
            <person name="Vettore A.L."/>
            <person name="Zago M.A."/>
            <person name="Zatz M."/>
            <person name="Meidanis J."/>
            <person name="Setubal J.C."/>
        </authorList>
    </citation>
    <scope>NUCLEOTIDE SEQUENCE [LARGE SCALE GENOMIC DNA]</scope>
    <source>
        <strain>9a5c</strain>
    </source>
</reference>
<evidence type="ECO:0000255" key="1">
    <source>
        <dbReference type="HAMAP-Rule" id="MF_00051"/>
    </source>
</evidence>
<evidence type="ECO:0000305" key="2"/>
<organism>
    <name type="scientific">Xylella fastidiosa (strain 9a5c)</name>
    <dbReference type="NCBI Taxonomy" id="160492"/>
    <lineage>
        <taxon>Bacteria</taxon>
        <taxon>Pseudomonadati</taxon>
        <taxon>Pseudomonadota</taxon>
        <taxon>Gammaproteobacteria</taxon>
        <taxon>Lysobacterales</taxon>
        <taxon>Lysobacteraceae</taxon>
        <taxon>Xylella</taxon>
    </lineage>
</organism>